<feature type="chain" id="PRO_1000197792" description="Putative membrane protein insertion efficiency factor">
    <location>
        <begin position="1"/>
        <end position="86"/>
    </location>
</feature>
<proteinExistence type="inferred from homology"/>
<keyword id="KW-1003">Cell membrane</keyword>
<keyword id="KW-0472">Membrane</keyword>
<sequence>MKKLLIVSVKAYQKYISPLSPPSCRYKPTCSAYMLTAIEKHGTKGILMGIARILRCHPFVAGGVDPVPEDFSLMRNKNTSKNAEKA</sequence>
<accession>B5XJY1</accession>
<comment type="function">
    <text evidence="1">Could be involved in insertion of integral membrane proteins into the membrane.</text>
</comment>
<comment type="subcellular location">
    <subcellularLocation>
        <location evidence="1">Cell membrane</location>
        <topology evidence="1">Peripheral membrane protein</topology>
        <orientation evidence="1">Cytoplasmic side</orientation>
    </subcellularLocation>
</comment>
<comment type="similarity">
    <text evidence="1">Belongs to the UPF0161 family.</text>
</comment>
<dbReference type="EMBL" id="CP000829">
    <property type="protein sequence ID" value="ACI60643.1"/>
    <property type="molecule type" value="Genomic_DNA"/>
</dbReference>
<dbReference type="KEGG" id="soz:Spy49_0305"/>
<dbReference type="HOGENOM" id="CLU_144811_5_2_9"/>
<dbReference type="Proteomes" id="UP000001039">
    <property type="component" value="Chromosome"/>
</dbReference>
<dbReference type="GO" id="GO:0005886">
    <property type="term" value="C:plasma membrane"/>
    <property type="evidence" value="ECO:0007669"/>
    <property type="project" value="UniProtKB-SubCell"/>
</dbReference>
<dbReference type="HAMAP" id="MF_00386">
    <property type="entry name" value="UPF0161_YidD"/>
    <property type="match status" value="1"/>
</dbReference>
<dbReference type="InterPro" id="IPR002696">
    <property type="entry name" value="Membr_insert_effic_factor_YidD"/>
</dbReference>
<dbReference type="NCBIfam" id="TIGR00278">
    <property type="entry name" value="membrane protein insertion efficiency factor YidD"/>
    <property type="match status" value="1"/>
</dbReference>
<dbReference type="PANTHER" id="PTHR33383">
    <property type="entry name" value="MEMBRANE PROTEIN INSERTION EFFICIENCY FACTOR-RELATED"/>
    <property type="match status" value="1"/>
</dbReference>
<dbReference type="PANTHER" id="PTHR33383:SF1">
    <property type="entry name" value="MEMBRANE PROTEIN INSERTION EFFICIENCY FACTOR-RELATED"/>
    <property type="match status" value="1"/>
</dbReference>
<dbReference type="Pfam" id="PF01809">
    <property type="entry name" value="YidD"/>
    <property type="match status" value="1"/>
</dbReference>
<dbReference type="SMART" id="SM01234">
    <property type="entry name" value="Haemolytic"/>
    <property type="match status" value="1"/>
</dbReference>
<gene>
    <name type="ordered locus">Spy49_0305</name>
</gene>
<evidence type="ECO:0000255" key="1">
    <source>
        <dbReference type="HAMAP-Rule" id="MF_00386"/>
    </source>
</evidence>
<organism>
    <name type="scientific">Streptococcus pyogenes serotype M49 (strain NZ131)</name>
    <dbReference type="NCBI Taxonomy" id="471876"/>
    <lineage>
        <taxon>Bacteria</taxon>
        <taxon>Bacillati</taxon>
        <taxon>Bacillota</taxon>
        <taxon>Bacilli</taxon>
        <taxon>Lactobacillales</taxon>
        <taxon>Streptococcaceae</taxon>
        <taxon>Streptococcus</taxon>
    </lineage>
</organism>
<protein>
    <recommendedName>
        <fullName evidence="1">Putative membrane protein insertion efficiency factor</fullName>
    </recommendedName>
</protein>
<name>YIDD_STRPZ</name>
<reference key="1">
    <citation type="journal article" date="2008" name="J. Bacteriol.">
        <title>Genome sequence of a nephritogenic and highly transformable M49 strain of Streptococcus pyogenes.</title>
        <authorList>
            <person name="McShan W.M."/>
            <person name="Ferretti J.J."/>
            <person name="Karasawa T."/>
            <person name="Suvorov A.N."/>
            <person name="Lin S."/>
            <person name="Qin B."/>
            <person name="Jia H."/>
            <person name="Kenton S."/>
            <person name="Najar F."/>
            <person name="Wu H."/>
            <person name="Scott J."/>
            <person name="Roe B.A."/>
            <person name="Savic D.J."/>
        </authorList>
    </citation>
    <scope>NUCLEOTIDE SEQUENCE [LARGE SCALE GENOMIC DNA]</scope>
    <source>
        <strain>NZ131</strain>
    </source>
</reference>